<dbReference type="EC" id="2.1.3.2" evidence="1"/>
<dbReference type="EMBL" id="CP000860">
    <property type="protein sequence ID" value="ACA59816.1"/>
    <property type="molecule type" value="Genomic_DNA"/>
</dbReference>
<dbReference type="RefSeq" id="WP_012302401.1">
    <property type="nucleotide sequence ID" value="NC_010424.1"/>
</dbReference>
<dbReference type="SMR" id="B1I4N1"/>
<dbReference type="STRING" id="477974.Daud_1305"/>
<dbReference type="KEGG" id="dau:Daud_1305"/>
<dbReference type="eggNOG" id="COG0540">
    <property type="taxonomic scope" value="Bacteria"/>
</dbReference>
<dbReference type="HOGENOM" id="CLU_043846_2_0_9"/>
<dbReference type="OrthoDB" id="9802587at2"/>
<dbReference type="UniPathway" id="UPA00070">
    <property type="reaction ID" value="UER00116"/>
</dbReference>
<dbReference type="Proteomes" id="UP000008544">
    <property type="component" value="Chromosome"/>
</dbReference>
<dbReference type="GO" id="GO:0005829">
    <property type="term" value="C:cytosol"/>
    <property type="evidence" value="ECO:0007669"/>
    <property type="project" value="TreeGrafter"/>
</dbReference>
<dbReference type="GO" id="GO:0016597">
    <property type="term" value="F:amino acid binding"/>
    <property type="evidence" value="ECO:0007669"/>
    <property type="project" value="InterPro"/>
</dbReference>
<dbReference type="GO" id="GO:0004070">
    <property type="term" value="F:aspartate carbamoyltransferase activity"/>
    <property type="evidence" value="ECO:0007669"/>
    <property type="project" value="UniProtKB-UniRule"/>
</dbReference>
<dbReference type="GO" id="GO:0006207">
    <property type="term" value="P:'de novo' pyrimidine nucleobase biosynthetic process"/>
    <property type="evidence" value="ECO:0007669"/>
    <property type="project" value="InterPro"/>
</dbReference>
<dbReference type="GO" id="GO:0044205">
    <property type="term" value="P:'de novo' UMP biosynthetic process"/>
    <property type="evidence" value="ECO:0007669"/>
    <property type="project" value="UniProtKB-UniRule"/>
</dbReference>
<dbReference type="GO" id="GO:0006520">
    <property type="term" value="P:amino acid metabolic process"/>
    <property type="evidence" value="ECO:0007669"/>
    <property type="project" value="InterPro"/>
</dbReference>
<dbReference type="FunFam" id="3.40.50.1370:FF:000007">
    <property type="entry name" value="Aspartate carbamoyltransferase"/>
    <property type="match status" value="1"/>
</dbReference>
<dbReference type="Gene3D" id="3.40.50.1370">
    <property type="entry name" value="Aspartate/ornithine carbamoyltransferase"/>
    <property type="match status" value="2"/>
</dbReference>
<dbReference type="HAMAP" id="MF_00001">
    <property type="entry name" value="Asp_carb_tr"/>
    <property type="match status" value="1"/>
</dbReference>
<dbReference type="InterPro" id="IPR006132">
    <property type="entry name" value="Asp/Orn_carbamoyltranf_P-bd"/>
</dbReference>
<dbReference type="InterPro" id="IPR006130">
    <property type="entry name" value="Asp/Orn_carbamoylTrfase"/>
</dbReference>
<dbReference type="InterPro" id="IPR036901">
    <property type="entry name" value="Asp/Orn_carbamoylTrfase_sf"/>
</dbReference>
<dbReference type="InterPro" id="IPR002082">
    <property type="entry name" value="Asp_carbamoyltransf"/>
</dbReference>
<dbReference type="InterPro" id="IPR006131">
    <property type="entry name" value="Asp_carbamoyltransf_Asp/Orn-bd"/>
</dbReference>
<dbReference type="NCBIfam" id="TIGR00670">
    <property type="entry name" value="asp_carb_tr"/>
    <property type="match status" value="1"/>
</dbReference>
<dbReference type="NCBIfam" id="NF002032">
    <property type="entry name" value="PRK00856.1"/>
    <property type="match status" value="1"/>
</dbReference>
<dbReference type="PANTHER" id="PTHR45753:SF6">
    <property type="entry name" value="ASPARTATE CARBAMOYLTRANSFERASE"/>
    <property type="match status" value="1"/>
</dbReference>
<dbReference type="PANTHER" id="PTHR45753">
    <property type="entry name" value="ORNITHINE CARBAMOYLTRANSFERASE, MITOCHONDRIAL"/>
    <property type="match status" value="1"/>
</dbReference>
<dbReference type="Pfam" id="PF00185">
    <property type="entry name" value="OTCace"/>
    <property type="match status" value="1"/>
</dbReference>
<dbReference type="Pfam" id="PF02729">
    <property type="entry name" value="OTCace_N"/>
    <property type="match status" value="1"/>
</dbReference>
<dbReference type="PRINTS" id="PR00100">
    <property type="entry name" value="AOTCASE"/>
</dbReference>
<dbReference type="PRINTS" id="PR00101">
    <property type="entry name" value="ATCASE"/>
</dbReference>
<dbReference type="SUPFAM" id="SSF53671">
    <property type="entry name" value="Aspartate/ornithine carbamoyltransferase"/>
    <property type="match status" value="1"/>
</dbReference>
<dbReference type="PROSITE" id="PS00097">
    <property type="entry name" value="CARBAMOYLTRANSFERASE"/>
    <property type="match status" value="1"/>
</dbReference>
<protein>
    <recommendedName>
        <fullName evidence="1">Aspartate carbamoyltransferase catalytic subunit</fullName>
        <ecNumber evidence="1">2.1.3.2</ecNumber>
    </recommendedName>
    <alternativeName>
        <fullName evidence="1">Aspartate transcarbamylase</fullName>
        <shortName evidence="1">ATCase</shortName>
    </alternativeName>
</protein>
<reference key="1">
    <citation type="submission" date="2007-10" db="EMBL/GenBank/DDBJ databases">
        <title>Complete sequence of chromosome of Desulforudis audaxviator MP104C.</title>
        <authorList>
            <person name="Copeland A."/>
            <person name="Lucas S."/>
            <person name="Lapidus A."/>
            <person name="Barry K."/>
            <person name="Glavina del Rio T."/>
            <person name="Dalin E."/>
            <person name="Tice H."/>
            <person name="Bruce D."/>
            <person name="Pitluck S."/>
            <person name="Lowry S.R."/>
            <person name="Larimer F."/>
            <person name="Land M.L."/>
            <person name="Hauser L."/>
            <person name="Kyrpides N."/>
            <person name="Ivanova N.N."/>
            <person name="Richardson P."/>
        </authorList>
    </citation>
    <scope>NUCLEOTIDE SEQUENCE [LARGE SCALE GENOMIC DNA]</scope>
    <source>
        <strain>MP104C</strain>
    </source>
</reference>
<comment type="function">
    <text evidence="1">Catalyzes the condensation of carbamoyl phosphate and aspartate to form carbamoyl aspartate and inorganic phosphate, the committed step in the de novo pyrimidine nucleotide biosynthesis pathway.</text>
</comment>
<comment type="catalytic activity">
    <reaction evidence="1">
        <text>carbamoyl phosphate + L-aspartate = N-carbamoyl-L-aspartate + phosphate + H(+)</text>
        <dbReference type="Rhea" id="RHEA:20013"/>
        <dbReference type="ChEBI" id="CHEBI:15378"/>
        <dbReference type="ChEBI" id="CHEBI:29991"/>
        <dbReference type="ChEBI" id="CHEBI:32814"/>
        <dbReference type="ChEBI" id="CHEBI:43474"/>
        <dbReference type="ChEBI" id="CHEBI:58228"/>
        <dbReference type="EC" id="2.1.3.2"/>
    </reaction>
</comment>
<comment type="pathway">
    <text evidence="1">Pyrimidine metabolism; UMP biosynthesis via de novo pathway; (S)-dihydroorotate from bicarbonate: step 2/3.</text>
</comment>
<comment type="subunit">
    <text evidence="1">Heterododecamer (2C3:3R2) of six catalytic PyrB chains organized as two trimers (C3), and six regulatory PyrI chains organized as three dimers (R2).</text>
</comment>
<comment type="similarity">
    <text evidence="1">Belongs to the aspartate/ornithine carbamoyltransferase superfamily. ATCase family.</text>
</comment>
<sequence length="306" mass="33237">MPVRHLLGLADMPAAEINEFLENALPMKQIISRDIKKVPTLRGKTVVTLFYEPSTRTRMSFELAAKYLSADTVNVSASASSATKGESLADTARTIAALGADLVVLRHPCAGAPHLLARMIDVPVVNAGDGMHEHPTQALLDLFTLREKRPDLEGLKLVIIGDILHSRVARSNIWALTRFGVDVHLVAPPTLLPAGIAAFGVTVHDRPEDALPDAGAVMVLRLQRERQQEGLIPDVREYARLYGLNSERLALTRPDAIVMHPGPMNRGIEIAHTVADGTRAVITDQVTNGVAVRMAVLYLLMLGRVD</sequence>
<evidence type="ECO:0000255" key="1">
    <source>
        <dbReference type="HAMAP-Rule" id="MF_00001"/>
    </source>
</evidence>
<gene>
    <name evidence="1" type="primary">pyrB</name>
    <name type="ordered locus">Daud_1305</name>
</gene>
<feature type="chain" id="PRO_1000201589" description="Aspartate carbamoyltransferase catalytic subunit">
    <location>
        <begin position="1"/>
        <end position="306"/>
    </location>
</feature>
<feature type="binding site" evidence="1">
    <location>
        <position position="56"/>
    </location>
    <ligand>
        <name>carbamoyl phosphate</name>
        <dbReference type="ChEBI" id="CHEBI:58228"/>
    </ligand>
</feature>
<feature type="binding site" evidence="1">
    <location>
        <position position="57"/>
    </location>
    <ligand>
        <name>carbamoyl phosphate</name>
        <dbReference type="ChEBI" id="CHEBI:58228"/>
    </ligand>
</feature>
<feature type="binding site" evidence="1">
    <location>
        <position position="84"/>
    </location>
    <ligand>
        <name>L-aspartate</name>
        <dbReference type="ChEBI" id="CHEBI:29991"/>
    </ligand>
</feature>
<feature type="binding site" evidence="1">
    <location>
        <position position="106"/>
    </location>
    <ligand>
        <name>carbamoyl phosphate</name>
        <dbReference type="ChEBI" id="CHEBI:58228"/>
    </ligand>
</feature>
<feature type="binding site" evidence="1">
    <location>
        <position position="134"/>
    </location>
    <ligand>
        <name>carbamoyl phosphate</name>
        <dbReference type="ChEBI" id="CHEBI:58228"/>
    </ligand>
</feature>
<feature type="binding site" evidence="1">
    <location>
        <position position="137"/>
    </location>
    <ligand>
        <name>carbamoyl phosphate</name>
        <dbReference type="ChEBI" id="CHEBI:58228"/>
    </ligand>
</feature>
<feature type="binding site" evidence="1">
    <location>
        <position position="167"/>
    </location>
    <ligand>
        <name>L-aspartate</name>
        <dbReference type="ChEBI" id="CHEBI:29991"/>
    </ligand>
</feature>
<feature type="binding site" evidence="1">
    <location>
        <position position="221"/>
    </location>
    <ligand>
        <name>L-aspartate</name>
        <dbReference type="ChEBI" id="CHEBI:29991"/>
    </ligand>
</feature>
<feature type="binding site" evidence="1">
    <location>
        <position position="262"/>
    </location>
    <ligand>
        <name>carbamoyl phosphate</name>
        <dbReference type="ChEBI" id="CHEBI:58228"/>
    </ligand>
</feature>
<feature type="binding site" evidence="1">
    <location>
        <position position="263"/>
    </location>
    <ligand>
        <name>carbamoyl phosphate</name>
        <dbReference type="ChEBI" id="CHEBI:58228"/>
    </ligand>
</feature>
<name>PYRB_DESAP</name>
<accession>B1I4N1</accession>
<proteinExistence type="inferred from homology"/>
<organism>
    <name type="scientific">Desulforudis audaxviator (strain MP104C)</name>
    <dbReference type="NCBI Taxonomy" id="477974"/>
    <lineage>
        <taxon>Bacteria</taxon>
        <taxon>Bacillati</taxon>
        <taxon>Bacillota</taxon>
        <taxon>Clostridia</taxon>
        <taxon>Thermoanaerobacterales</taxon>
        <taxon>Candidatus Desulforudaceae</taxon>
        <taxon>Candidatus Desulforudis</taxon>
    </lineage>
</organism>
<keyword id="KW-0665">Pyrimidine biosynthesis</keyword>
<keyword id="KW-1185">Reference proteome</keyword>
<keyword id="KW-0808">Transferase</keyword>